<organism>
    <name type="scientific">Strongylocentrotus purpuratus</name>
    <name type="common">Purple sea urchin</name>
    <dbReference type="NCBI Taxonomy" id="7668"/>
    <lineage>
        <taxon>Eukaryota</taxon>
        <taxon>Metazoa</taxon>
        <taxon>Echinodermata</taxon>
        <taxon>Eleutherozoa</taxon>
        <taxon>Echinozoa</taxon>
        <taxon>Echinoidea</taxon>
        <taxon>Euechinoidea</taxon>
        <taxon>Echinacea</taxon>
        <taxon>Camarodonta</taxon>
        <taxon>Echinidea</taxon>
        <taxon>Strongylocentrotidae</taxon>
        <taxon>Strongylocentrotus</taxon>
    </lineage>
</organism>
<gene>
    <name type="primary">REJ</name>
</gene>
<protein>
    <recommendedName>
        <fullName>Sperm receptor for egg jelly</fullName>
        <shortName>suREJ</shortName>
    </recommendedName>
</protein>
<evidence type="ECO:0000255" key="1"/>
<evidence type="ECO:0000255" key="2">
    <source>
        <dbReference type="PROSITE-ProRule" id="PRU00040"/>
    </source>
</evidence>
<evidence type="ECO:0000255" key="3">
    <source>
        <dbReference type="PROSITE-ProRule" id="PRU00076"/>
    </source>
</evidence>
<evidence type="ECO:0000255" key="4">
    <source>
        <dbReference type="PROSITE-ProRule" id="PRU00098"/>
    </source>
</evidence>
<evidence type="ECO:0000255" key="5">
    <source>
        <dbReference type="PROSITE-ProRule" id="PRU00511"/>
    </source>
</evidence>
<evidence type="ECO:0000269" key="6">
    <source>
    </source>
</evidence>
<evidence type="ECO:0000305" key="7"/>
<reference key="1">
    <citation type="journal article" date="1996" name="J. Cell Biol.">
        <title>The sea urchin sperm receptor for egg jelly is a modular protein with extensive homology to the human polycystic kidney disease protein, PKD1.</title>
        <authorList>
            <person name="Moy G.W."/>
            <person name="Mendoza L.M."/>
            <person name="Schulz J.R."/>
            <person name="Swanson W.J."/>
            <person name="Glabe C.G."/>
            <person name="Vacquier V.D."/>
        </authorList>
    </citation>
    <scope>NUCLEOTIDE SEQUENCE [MRNA]</scope>
    <scope>PARTIAL PROTEIN SEQUENCE</scope>
    <scope>VARIANTS ALA-440; PRO-593; MET-1204; SER-1371; ALA-1390 AND VAL-1443</scope>
    <source>
        <tissue>Testis</tissue>
    </source>
</reference>
<sequence length="1450" mass="158165">MSVFVILILFNAILNFKTVGPAAVSSKTVDCASAPCMNGGTCADGFNNFTCFCEEGFTGSMCETEYGCFRPWFYGPAFGYCYLWERVDYNWTQARESCIDQGRGAELASIHSAEENAFVYAQIRRYAWIGLSDQVTEGVFDYADGTPVDYLSFPDKNKQSETRDCVYVKHLRVDNWSLLDCRANKTSICKSTTTFSATDGCATGWVHNPATGYCYFYEERGGMWSKGREFCLDAGADLASIHSAEENAFIFDMLTEFVWLGLNDLETEGVYTNFSDGTPADFDNFPADNYQNEDHDCVSIRHLEKTDRYWFFLGCDDTVTSICKRPHEVVATQAPPYLFTTTDVPATTTTIPTTTTTISATTRTIDAMILIELLLFPNNVSSIDNIFRVNNTILVTASVLGSFQALSSQILWSITNHLSGDSVQYTVYSEDAVLVRFTTVSIFTIKATAVGNSHNLTATANATVKHVCISSLTTSVKEHCDAPHPAVYLRAFDIHISTHMELNGKCIDPMTPDFKWRIFTSTEADDVVTAFEKITHTRQVMIPRGTLPYGIYSLNLNAKTRLKTSGEVTGEKEIISWLEIQPPPLVAVIKGGASRSHGVSSNLIVDGSNSYDPDVPPGSSSNVTFLWYCVVVDPDVMYSSLDEAIQNTDNACFEDEGIMMNSTSSMIEVIANKLNANVTMNFWLNISKEGQISGLTQQRIHLTLGLLPEIEISCISNCNMYIFTAERLVLHASCTNCDSENEDVSFRWSLESNHTSVIGDLSSQTTTGLDQPYLVLKPLTFDSISEMGSIILRVTGSQSDSDGYAEFSVDLPHNAPPALGSCVVTPDEGYALQTDFTVTCSNFTDVDEPLTYQIILFSHVDVVDWMFVGRGEGFQLYEGSAPIKDGLYLPVGVGTDDHDILLQVNVRDCNMASTSVYISATVHPPTLDAVGMNLVQELLDMALLVETNVNALLAVGDPGQAAQLISALGSILNSIGDEDDSEEGRETRSEIRSFLVDCVAAIPVESMTSLKQSSAALAVVTHNKQEISTHVQMLAASTLSEMTSFVKSKSGSYTQAQENIESAGTILVEGLSNILSAAKETERLLSDDTSQEREDHKNLIEVAVSTINDIQDAIVAGKIPSEAATIITSPALSIAVGSISRDELAEATFGGPEDLGSFRMPSQDVLNQAMEHALGTTVSMKMSAMKWNPFSWPGAGGESIKSSIVGIQLEADQMLEFHDLTADIDVYLPMRETLSADPVSVHITKTSSDSVLIDHSSLPVDGALHLTVIAENEPMVALSICTARISITESSCVGTDTPLGVSNEDPDTDANFTWTVPLVDLKAADGIMIRLYDSEDQPGYENDNITLSVFMHTLQCNFWNEDQQEWDSTGCKVGPLSKPSTTHCLCNHLTGFFGSSILVPPNHAQPVIGGHKLTGVDFLICVLIGYGIYCVALVIRVVGCSFAIRVHKVL</sequence>
<dbReference type="EMBL" id="U40832">
    <property type="protein sequence ID" value="AAB08448.1"/>
    <property type="molecule type" value="mRNA"/>
</dbReference>
<dbReference type="PIR" id="T30273">
    <property type="entry name" value="T30273"/>
</dbReference>
<dbReference type="RefSeq" id="NP_999773.1">
    <property type="nucleotide sequence ID" value="NM_214608.1"/>
</dbReference>
<dbReference type="SMR" id="Q26627"/>
<dbReference type="FunCoup" id="Q26627">
    <property type="interactions" value="781"/>
</dbReference>
<dbReference type="STRING" id="7668.Q26627"/>
<dbReference type="TCDB" id="1.A.5.1.4">
    <property type="family name" value="the polycystin cation channel (pcc) family"/>
</dbReference>
<dbReference type="GlyCosmos" id="Q26627">
    <property type="glycosylation" value="17 sites, No reported glycans"/>
</dbReference>
<dbReference type="EnsemblMetazoa" id="NM_214608">
    <property type="protein sequence ID" value="NP_999773"/>
    <property type="gene ID" value="GeneID_373460"/>
</dbReference>
<dbReference type="GeneID" id="373460"/>
<dbReference type="KEGG" id="spu:373460"/>
<dbReference type="CTD" id="373460"/>
<dbReference type="eggNOG" id="KOG3599">
    <property type="taxonomic scope" value="Eukaryota"/>
</dbReference>
<dbReference type="eggNOG" id="KOG4297">
    <property type="taxonomic scope" value="Eukaryota"/>
</dbReference>
<dbReference type="HOGENOM" id="CLU_265129_0_0_1"/>
<dbReference type="InParanoid" id="Q26627"/>
<dbReference type="OMA" id="NACFEDE"/>
<dbReference type="OrthoDB" id="2121937at2759"/>
<dbReference type="PhylomeDB" id="Q26627"/>
<dbReference type="Proteomes" id="UP000007110">
    <property type="component" value="Unassembled WGS sequence"/>
</dbReference>
<dbReference type="GO" id="GO:0016020">
    <property type="term" value="C:membrane"/>
    <property type="evidence" value="ECO:0000318"/>
    <property type="project" value="GO_Central"/>
</dbReference>
<dbReference type="GO" id="GO:0005886">
    <property type="term" value="C:plasma membrane"/>
    <property type="evidence" value="ECO:0007669"/>
    <property type="project" value="UniProtKB-SubCell"/>
</dbReference>
<dbReference type="GO" id="GO:0005262">
    <property type="term" value="F:calcium channel activity"/>
    <property type="evidence" value="ECO:0000318"/>
    <property type="project" value="GO_Central"/>
</dbReference>
<dbReference type="GO" id="GO:0005509">
    <property type="term" value="F:calcium ion binding"/>
    <property type="evidence" value="ECO:0007669"/>
    <property type="project" value="InterPro"/>
</dbReference>
<dbReference type="GO" id="GO:0030246">
    <property type="term" value="F:carbohydrate binding"/>
    <property type="evidence" value="ECO:0007669"/>
    <property type="project" value="UniProtKB-KW"/>
</dbReference>
<dbReference type="GO" id="GO:0050982">
    <property type="term" value="P:detection of mechanical stimulus"/>
    <property type="evidence" value="ECO:0000318"/>
    <property type="project" value="GO_Central"/>
</dbReference>
<dbReference type="CDD" id="cd00037">
    <property type="entry name" value="CLECT"/>
    <property type="match status" value="1"/>
</dbReference>
<dbReference type="CDD" id="cd00054">
    <property type="entry name" value="EGF_CA"/>
    <property type="match status" value="1"/>
</dbReference>
<dbReference type="FunFam" id="2.10.25.10:FF:000143">
    <property type="entry name" value="Protein crumbs 1"/>
    <property type="match status" value="1"/>
</dbReference>
<dbReference type="FunFam" id="3.10.100.10:FF:000161">
    <property type="entry name" value="Sperm receptor for egg jelly"/>
    <property type="match status" value="1"/>
</dbReference>
<dbReference type="Gene3D" id="2.60.220.50">
    <property type="match status" value="1"/>
</dbReference>
<dbReference type="Gene3D" id="2.10.25.10">
    <property type="entry name" value="Laminin"/>
    <property type="match status" value="1"/>
</dbReference>
<dbReference type="Gene3D" id="3.10.100.10">
    <property type="entry name" value="Mannose-Binding Protein A, subunit A"/>
    <property type="match status" value="2"/>
</dbReference>
<dbReference type="InterPro" id="IPR001304">
    <property type="entry name" value="C-type_lectin-like"/>
</dbReference>
<dbReference type="InterPro" id="IPR016186">
    <property type="entry name" value="C-type_lectin-like/link_sf"/>
</dbReference>
<dbReference type="InterPro" id="IPR016187">
    <property type="entry name" value="CTDL_fold"/>
</dbReference>
<dbReference type="InterPro" id="IPR001881">
    <property type="entry name" value="EGF-like_Ca-bd_dom"/>
</dbReference>
<dbReference type="InterPro" id="IPR000742">
    <property type="entry name" value="EGF-like_dom"/>
</dbReference>
<dbReference type="InterPro" id="IPR000152">
    <property type="entry name" value="EGF-type_Asp/Asn_hydroxyl_site"/>
</dbReference>
<dbReference type="InterPro" id="IPR057244">
    <property type="entry name" value="GAIN_B"/>
</dbReference>
<dbReference type="InterPro" id="IPR046338">
    <property type="entry name" value="GAIN_dom_sf"/>
</dbReference>
<dbReference type="InterPro" id="IPR000203">
    <property type="entry name" value="GPS"/>
</dbReference>
<dbReference type="InterPro" id="IPR002859">
    <property type="entry name" value="PKD/REJ-like"/>
</dbReference>
<dbReference type="InterPro" id="IPR014010">
    <property type="entry name" value="REJ_dom"/>
</dbReference>
<dbReference type="PANTHER" id="PTHR46730:SF1">
    <property type="entry name" value="PLAT DOMAIN-CONTAINING PROTEIN"/>
    <property type="match status" value="1"/>
</dbReference>
<dbReference type="PANTHER" id="PTHR46730">
    <property type="entry name" value="POLYCYSTIN-1"/>
    <property type="match status" value="1"/>
</dbReference>
<dbReference type="Pfam" id="PF00008">
    <property type="entry name" value="EGF"/>
    <property type="match status" value="1"/>
</dbReference>
<dbReference type="Pfam" id="PF01825">
    <property type="entry name" value="GPS"/>
    <property type="match status" value="1"/>
</dbReference>
<dbReference type="Pfam" id="PF00059">
    <property type="entry name" value="Lectin_C"/>
    <property type="match status" value="2"/>
</dbReference>
<dbReference type="Pfam" id="PF02010">
    <property type="entry name" value="REJ"/>
    <property type="match status" value="1"/>
</dbReference>
<dbReference type="SMART" id="SM00034">
    <property type="entry name" value="CLECT"/>
    <property type="match status" value="2"/>
</dbReference>
<dbReference type="SMART" id="SM00181">
    <property type="entry name" value="EGF"/>
    <property type="match status" value="1"/>
</dbReference>
<dbReference type="SMART" id="SM00179">
    <property type="entry name" value="EGF_CA"/>
    <property type="match status" value="1"/>
</dbReference>
<dbReference type="SMART" id="SM00303">
    <property type="entry name" value="GPS"/>
    <property type="match status" value="1"/>
</dbReference>
<dbReference type="SUPFAM" id="SSF56436">
    <property type="entry name" value="C-type lectin-like"/>
    <property type="match status" value="2"/>
</dbReference>
<dbReference type="SUPFAM" id="SSF57196">
    <property type="entry name" value="EGF/Laminin"/>
    <property type="match status" value="1"/>
</dbReference>
<dbReference type="PROSITE" id="PS00010">
    <property type="entry name" value="ASX_HYDROXYL"/>
    <property type="match status" value="1"/>
</dbReference>
<dbReference type="PROSITE" id="PS50041">
    <property type="entry name" value="C_TYPE_LECTIN_2"/>
    <property type="match status" value="2"/>
</dbReference>
<dbReference type="PROSITE" id="PS00022">
    <property type="entry name" value="EGF_1"/>
    <property type="match status" value="1"/>
</dbReference>
<dbReference type="PROSITE" id="PS01186">
    <property type="entry name" value="EGF_2"/>
    <property type="match status" value="1"/>
</dbReference>
<dbReference type="PROSITE" id="PS50026">
    <property type="entry name" value="EGF_3"/>
    <property type="match status" value="1"/>
</dbReference>
<dbReference type="PROSITE" id="PS50221">
    <property type="entry name" value="GAIN_B"/>
    <property type="match status" value="1"/>
</dbReference>
<dbReference type="PROSITE" id="PS51111">
    <property type="entry name" value="REJ"/>
    <property type="match status" value="1"/>
</dbReference>
<comment type="function">
    <text>Receptor for the egg jelly ligands inducing the acrosome reaction. Could be a regulator of sperm ion channels.</text>
</comment>
<comment type="subunit">
    <text evidence="4">Heterodimer of 2 chains generated by proteolytic processing; the large extracellular N-terminal fragment and the membrane-bound C-terminal fragment predominantly remain associated and non-covalently linked.</text>
</comment>
<comment type="subcellular location">
    <subcellularLocation>
        <location>Cell membrane</location>
        <topology>Single-pass type I membrane protein</topology>
    </subcellularLocation>
    <text>Present on the surface of the sperm flagellum and also on a thin belt of membrane directly over the acrosomal granule at the anterior apex of the sperm head.</text>
</comment>
<comment type="developmental stage">
    <text>Expressed at the earliest stage of spermiogenesis.</text>
</comment>
<comment type="PTM">
    <text evidence="4">Autoproteolytically processed at the GPS region of the GAIN-B domain; this cleavage modulates receptor activity.</text>
</comment>
<comment type="similarity">
    <text evidence="7">Belongs to the polycystin family.</text>
</comment>
<accession>Q26627</accession>
<name>SUREJ_STRPU</name>
<proteinExistence type="evidence at protein level"/>
<feature type="signal peptide" evidence="1">
    <location>
        <begin position="1"/>
        <end position="26"/>
    </location>
</feature>
<feature type="chain" id="PRO_0000024301" description="Sperm receptor for egg jelly">
    <location>
        <begin position="27"/>
        <end position="1450"/>
    </location>
</feature>
<feature type="topological domain" description="Extracellular" evidence="1">
    <location>
        <begin position="27"/>
        <end position="1414"/>
    </location>
</feature>
<feature type="transmembrane region" description="Helical" evidence="1">
    <location>
        <begin position="1415"/>
        <end position="1435"/>
    </location>
</feature>
<feature type="topological domain" description="Cytoplasmic" evidence="1">
    <location>
        <begin position="1436"/>
        <end position="1450"/>
    </location>
</feature>
<feature type="domain" description="EGF-like" evidence="3">
    <location>
        <begin position="27"/>
        <end position="63"/>
    </location>
</feature>
<feature type="domain" description="C-type lectin 1" evidence="2">
    <location>
        <begin position="77"/>
        <end position="190"/>
    </location>
</feature>
<feature type="domain" description="C-type lectin 2" evidence="2">
    <location>
        <begin position="210"/>
        <end position="324"/>
    </location>
</feature>
<feature type="domain" description="REJ" evidence="5">
    <location>
        <begin position="468"/>
        <end position="1187"/>
    </location>
</feature>
<feature type="domain" description="GAIN-B" evidence="4">
    <location>
        <begin position="1274"/>
        <end position="1405"/>
    </location>
</feature>
<feature type="region of interest" description="GPS" evidence="4">
    <location>
        <begin position="1356"/>
        <end position="1405"/>
    </location>
</feature>
<feature type="site" description="Cleavage; by autolysis" evidence="4">
    <location>
        <begin position="1389"/>
        <end position="1390"/>
    </location>
</feature>
<feature type="glycosylation site" description="N-linked (GlcNAc...) asparagine" evidence="1">
    <location>
        <position position="48"/>
    </location>
</feature>
<feature type="glycosylation site" description="N-linked (GlcNAc...) asparagine" evidence="1">
    <location>
        <position position="90"/>
    </location>
</feature>
<feature type="glycosylation site" description="N-linked (GlcNAc...) asparagine" evidence="1">
    <location>
        <position position="175"/>
    </location>
</feature>
<feature type="glycosylation site" description="N-linked (GlcNAc...) asparagine" evidence="1">
    <location>
        <position position="184"/>
    </location>
</feature>
<feature type="glycosylation site" description="N-linked (GlcNAc...) asparagine" evidence="1">
    <location>
        <position position="273"/>
    </location>
</feature>
<feature type="glycosylation site" description="N-linked (GlcNAc...) asparagine" evidence="1">
    <location>
        <position position="379"/>
    </location>
</feature>
<feature type="glycosylation site" description="N-linked (GlcNAc...) asparagine" evidence="1">
    <location>
        <position position="390"/>
    </location>
</feature>
<feature type="glycosylation site" description="N-linked (GlcNAc...) asparagine" evidence="1">
    <location>
        <position position="455"/>
    </location>
</feature>
<feature type="glycosylation site" description="N-linked (GlcNAc...) asparagine" evidence="1">
    <location>
        <position position="461"/>
    </location>
</feature>
<feature type="glycosylation site" description="N-linked (GlcNAc...) asparagine" evidence="1">
    <location>
        <position position="622"/>
    </location>
</feature>
<feature type="glycosylation site" description="N-linked (GlcNAc...) asparagine" evidence="1">
    <location>
        <position position="661"/>
    </location>
</feature>
<feature type="glycosylation site" description="N-linked (GlcNAc...) asparagine" evidence="1">
    <location>
        <position position="677"/>
    </location>
</feature>
<feature type="glycosylation site" description="N-linked (GlcNAc...) asparagine" evidence="1">
    <location>
        <position position="685"/>
    </location>
</feature>
<feature type="glycosylation site" description="N-linked (GlcNAc...) asparagine" evidence="1">
    <location>
        <position position="753"/>
    </location>
</feature>
<feature type="glycosylation site" description="N-linked (GlcNAc...) asparagine" evidence="1">
    <location>
        <position position="842"/>
    </location>
</feature>
<feature type="glycosylation site" description="N-linked (GlcNAc...) asparagine" evidence="1">
    <location>
        <position position="1311"/>
    </location>
</feature>
<feature type="glycosylation site" description="N-linked (GlcNAc...) asparagine" evidence="1">
    <location>
        <position position="1344"/>
    </location>
</feature>
<feature type="disulfide bond" evidence="3">
    <location>
        <begin position="31"/>
        <end position="42"/>
    </location>
</feature>
<feature type="disulfide bond" evidence="3">
    <location>
        <begin position="36"/>
        <end position="51"/>
    </location>
</feature>
<feature type="disulfide bond" evidence="3">
    <location>
        <begin position="53"/>
        <end position="62"/>
    </location>
</feature>
<feature type="disulfide bond" evidence="2">
    <location>
        <begin position="98"/>
        <end position="189"/>
    </location>
</feature>
<feature type="disulfide bond" evidence="2">
    <location>
        <begin position="165"/>
        <end position="181"/>
    </location>
</feature>
<feature type="disulfide bond" evidence="2">
    <location>
        <begin position="231"/>
        <end position="323"/>
    </location>
</feature>
<feature type="disulfide bond" evidence="2">
    <location>
        <begin position="297"/>
        <end position="315"/>
    </location>
</feature>
<feature type="disulfide bond" evidence="4">
    <location>
        <begin position="1356"/>
        <end position="1384"/>
    </location>
</feature>
<feature type="disulfide bond" evidence="4">
    <location>
        <begin position="1371"/>
        <end position="1386"/>
    </location>
</feature>
<feature type="sequence variant" evidence="6">
    <original>V</original>
    <variation>A</variation>
    <location>
        <position position="440"/>
    </location>
</feature>
<feature type="sequence variant" evidence="6">
    <original>A</original>
    <variation>P</variation>
    <location>
        <position position="593"/>
    </location>
</feature>
<feature type="sequence variant" evidence="6">
    <original>I</original>
    <variation>M</variation>
    <location>
        <position position="1204"/>
    </location>
</feature>
<feature type="sequence variant" evidence="6">
    <original>C</original>
    <variation>S</variation>
    <location>
        <position position="1371"/>
    </location>
</feature>
<feature type="sequence variant" evidence="6">
    <original>T</original>
    <variation>A</variation>
    <location>
        <position position="1390"/>
    </location>
</feature>
<feature type="sequence variant" evidence="6">
    <original>A</original>
    <variation>V</variation>
    <location>
        <position position="1443"/>
    </location>
</feature>
<keyword id="KW-1003">Cell membrane</keyword>
<keyword id="KW-0903">Direct protein sequencing</keyword>
<keyword id="KW-1015">Disulfide bond</keyword>
<keyword id="KW-0245">EGF-like domain</keyword>
<keyword id="KW-0325">Glycoprotein</keyword>
<keyword id="KW-0430">Lectin</keyword>
<keyword id="KW-0472">Membrane</keyword>
<keyword id="KW-0675">Receptor</keyword>
<keyword id="KW-1185">Reference proteome</keyword>
<keyword id="KW-0677">Repeat</keyword>
<keyword id="KW-0732">Signal</keyword>
<keyword id="KW-0812">Transmembrane</keyword>
<keyword id="KW-1133">Transmembrane helix</keyword>